<organism>
    <name type="scientific">Otaria byronia</name>
    <name type="common">South American sea lion</name>
    <dbReference type="NCBI Taxonomy" id="161932"/>
    <lineage>
        <taxon>Eukaryota</taxon>
        <taxon>Metazoa</taxon>
        <taxon>Chordata</taxon>
        <taxon>Craniata</taxon>
        <taxon>Vertebrata</taxon>
        <taxon>Euteleostomi</taxon>
        <taxon>Mammalia</taxon>
        <taxon>Eutheria</taxon>
        <taxon>Laurasiatheria</taxon>
        <taxon>Carnivora</taxon>
        <taxon>Caniformia</taxon>
        <taxon>Pinnipedia</taxon>
        <taxon>Otariidae</taxon>
        <taxon>Otaria</taxon>
    </lineage>
</organism>
<protein>
    <recommendedName>
        <fullName>Interferon-induced GTP-binding protein Mx1</fullName>
    </recommendedName>
    <alternativeName>
        <fullName>Myxoma resistance protein 1</fullName>
    </alternativeName>
    <alternativeName>
        <fullName>Myxovirus resistance protein 1</fullName>
    </alternativeName>
</protein>
<evidence type="ECO:0000250" key="1"/>
<evidence type="ECO:0000250" key="2">
    <source>
        <dbReference type="UniProtKB" id="P20591"/>
    </source>
</evidence>
<evidence type="ECO:0000255" key="3"/>
<evidence type="ECO:0000255" key="4">
    <source>
        <dbReference type="PROSITE-ProRule" id="PRU00720"/>
    </source>
</evidence>
<evidence type="ECO:0000255" key="5">
    <source>
        <dbReference type="PROSITE-ProRule" id="PRU01055"/>
    </source>
</evidence>
<evidence type="ECO:0000256" key="6">
    <source>
        <dbReference type="SAM" id="MobiDB-lite"/>
    </source>
</evidence>
<evidence type="ECO:0000269" key="7">
    <source>
    </source>
</evidence>
<gene>
    <name type="primary">MX1</name>
    <name type="synonym">MX</name>
</gene>
<proteinExistence type="evidence at transcript level"/>
<reference key="1">
    <citation type="submission" date="2005-07" db="EMBL/GenBank/DDBJ databases">
        <title>Identification of Mx cDNAs in sea mammals.</title>
        <authorList>
            <person name="Sakamoto A."/>
            <person name="Seyama T."/>
            <person name="Ueda J."/>
            <person name="Watanabe T."/>
        </authorList>
    </citation>
    <scope>NUCLEOTIDE SEQUENCE [MRNA]</scope>
</reference>
<reference key="2">
    <citation type="journal article" date="2007" name="Microbes Infect.">
        <title>The Mx GTPase family of interferon-induced antiviral proteins.</title>
        <authorList>
            <person name="Haller O."/>
            <person name="Stertz S."/>
            <person name="Kochs G."/>
        </authorList>
    </citation>
    <scope>REVIEW</scope>
    <scope>INDUCTION</scope>
</reference>
<sequence length="658" mass="75201">MVNSKGKITDSDPGSSHLLLNGLADKAGKNQDTEPENSLCSQYEEKVRPCIDLIDSLRALGVEQDLALPAIAVIGDQSSGKSSVLEALSGVALPRGSGIVTRCPLVLKLKKLLNKDEWRGKVSYQDFEMEISDPSEVEVEINKAQNAIAGEGQGISHELISLEVSSPHVPDLTLIDLPGITRVAVGNQPADIGHQTKKLIKKYILKQETINLVVVPCNVDIATTEALSMAQEVDPDGDRTIGILTKPDLVDRGTESKVVDVAQNLVCHLKKGYMIVKCRGQQDIQDQVTLTEALQKERDFFEDHPHFRVLLEEGRATVPCLADRLTSELITHICKTLPLLEKQIKENYEKITEELQKYGSDVPEEEHEKMFFLIEKINAFNHDITSLTEGEEFVGEDECRLFTKIRNEFHKWSLVIEKRFQQGYKAICKQIERFENRYRGRELPGFVNYKTFEIIIKQQIKELEEPAVYMLHTITDMVQAAFTDISEANFAEFFNLYRTTKSKIEDIKFELEKEAEKSIRLHFQMEQIVYCQDQVYQCALQRVREESDKEKDKKINSMCSKEVSSVNISLSDIFEHLLAYRQEATNRISSHIPLIIQYFILQVYGQKLQKDMLLLLHDKDTHNWLLKERSDTRDKRKLLKERLARLAQARRRLAKFPG</sequence>
<feature type="chain" id="PRO_0000319954" description="Interferon-induced GTP-binding protein Mx1">
    <location>
        <begin position="1"/>
        <end position="658"/>
    </location>
</feature>
<feature type="domain" description="Dynamin-type G" evidence="5">
    <location>
        <begin position="65"/>
        <end position="338"/>
    </location>
</feature>
<feature type="domain" description="GED" evidence="4">
    <location>
        <begin position="570"/>
        <end position="658"/>
    </location>
</feature>
<feature type="region of interest" description="Disordered" evidence="6">
    <location>
        <begin position="1"/>
        <end position="20"/>
    </location>
</feature>
<feature type="region of interest" description="G1 motif" evidence="5">
    <location>
        <begin position="75"/>
        <end position="82"/>
    </location>
</feature>
<feature type="region of interest" description="G2 motif" evidence="5">
    <location>
        <begin position="100"/>
        <end position="102"/>
    </location>
</feature>
<feature type="region of interest" description="G3 motif" evidence="5">
    <location>
        <begin position="176"/>
        <end position="179"/>
    </location>
</feature>
<feature type="region of interest" description="G4 motif" evidence="5">
    <location>
        <begin position="245"/>
        <end position="248"/>
    </location>
</feature>
<feature type="region of interest" description="G5 motif" evidence="5">
    <location>
        <begin position="277"/>
        <end position="280"/>
    </location>
</feature>
<feature type="region of interest" description="Bundle signaling element (BSE)" evidence="1">
    <location>
        <begin position="339"/>
        <end position="364"/>
    </location>
</feature>
<feature type="region of interest" description="Middle domain" evidence="1">
    <location>
        <begin position="364"/>
        <end position="531"/>
    </location>
</feature>
<feature type="region of interest" description="Stalk" evidence="1">
    <location>
        <begin position="365"/>
        <end position="628"/>
    </location>
</feature>
<feature type="region of interest" description="Critical for lipid-binding" evidence="1">
    <location>
        <begin position="551"/>
        <end position="554"/>
    </location>
</feature>
<feature type="binding site" evidence="3">
    <location>
        <begin position="75"/>
        <end position="82"/>
    </location>
    <ligand>
        <name>GTP</name>
        <dbReference type="ChEBI" id="CHEBI:37565"/>
    </ligand>
</feature>
<feature type="binding site" evidence="3">
    <location>
        <begin position="176"/>
        <end position="180"/>
    </location>
    <ligand>
        <name>GTP</name>
        <dbReference type="ChEBI" id="CHEBI:37565"/>
    </ligand>
</feature>
<feature type="binding site" evidence="3">
    <location>
        <begin position="245"/>
        <end position="248"/>
    </location>
    <ligand>
        <name>GTP</name>
        <dbReference type="ChEBI" id="CHEBI:37565"/>
    </ligand>
</feature>
<feature type="modified residue" description="N-acetylmethionine" evidence="2">
    <location>
        <position position="1"/>
    </location>
</feature>
<keyword id="KW-0007">Acetylation</keyword>
<keyword id="KW-0051">Antiviral defense</keyword>
<keyword id="KW-0963">Cytoplasm</keyword>
<keyword id="KW-0256">Endoplasmic reticulum</keyword>
<keyword id="KW-0342">GTP-binding</keyword>
<keyword id="KW-0391">Immunity</keyword>
<keyword id="KW-0399">Innate immunity</keyword>
<keyword id="KW-0472">Membrane</keyword>
<keyword id="KW-0547">Nucleotide-binding</keyword>
<keyword id="KW-0832">Ubl conjugation</keyword>
<dbReference type="EMBL" id="AB222180">
    <property type="protein sequence ID" value="BAE16331.1"/>
    <property type="molecule type" value="mRNA"/>
</dbReference>
<dbReference type="SMR" id="Q4ADG7"/>
<dbReference type="GO" id="GO:0005737">
    <property type="term" value="C:cytoplasm"/>
    <property type="evidence" value="ECO:0000250"/>
    <property type="project" value="UniProtKB"/>
</dbReference>
<dbReference type="GO" id="GO:0005789">
    <property type="term" value="C:endoplasmic reticulum membrane"/>
    <property type="evidence" value="ECO:0007669"/>
    <property type="project" value="UniProtKB-SubCell"/>
</dbReference>
<dbReference type="GO" id="GO:0005874">
    <property type="term" value="C:microtubule"/>
    <property type="evidence" value="ECO:0007669"/>
    <property type="project" value="TreeGrafter"/>
</dbReference>
<dbReference type="GO" id="GO:0005634">
    <property type="term" value="C:nucleus"/>
    <property type="evidence" value="ECO:0007669"/>
    <property type="project" value="TreeGrafter"/>
</dbReference>
<dbReference type="GO" id="GO:0048471">
    <property type="term" value="C:perinuclear region of cytoplasm"/>
    <property type="evidence" value="ECO:0007669"/>
    <property type="project" value="UniProtKB-SubCell"/>
</dbReference>
<dbReference type="GO" id="GO:0005886">
    <property type="term" value="C:plasma membrane"/>
    <property type="evidence" value="ECO:0007669"/>
    <property type="project" value="TreeGrafter"/>
</dbReference>
<dbReference type="GO" id="GO:0098793">
    <property type="term" value="C:presynapse"/>
    <property type="evidence" value="ECO:0007669"/>
    <property type="project" value="GOC"/>
</dbReference>
<dbReference type="GO" id="GO:0005525">
    <property type="term" value="F:GTP binding"/>
    <property type="evidence" value="ECO:0007669"/>
    <property type="project" value="UniProtKB-KW"/>
</dbReference>
<dbReference type="GO" id="GO:0003924">
    <property type="term" value="F:GTPase activity"/>
    <property type="evidence" value="ECO:0007669"/>
    <property type="project" value="InterPro"/>
</dbReference>
<dbReference type="GO" id="GO:0008017">
    <property type="term" value="F:microtubule binding"/>
    <property type="evidence" value="ECO:0007669"/>
    <property type="project" value="TreeGrafter"/>
</dbReference>
<dbReference type="GO" id="GO:0051607">
    <property type="term" value="P:defense response to virus"/>
    <property type="evidence" value="ECO:0007669"/>
    <property type="project" value="UniProtKB-KW"/>
</dbReference>
<dbReference type="GO" id="GO:0045087">
    <property type="term" value="P:innate immune response"/>
    <property type="evidence" value="ECO:0007669"/>
    <property type="project" value="UniProtKB-KW"/>
</dbReference>
<dbReference type="GO" id="GO:0031623">
    <property type="term" value="P:receptor internalization"/>
    <property type="evidence" value="ECO:0007669"/>
    <property type="project" value="TreeGrafter"/>
</dbReference>
<dbReference type="GO" id="GO:0016185">
    <property type="term" value="P:synaptic vesicle budding from presynaptic endocytic zone membrane"/>
    <property type="evidence" value="ECO:0007669"/>
    <property type="project" value="TreeGrafter"/>
</dbReference>
<dbReference type="CDD" id="cd08771">
    <property type="entry name" value="DLP_1"/>
    <property type="match status" value="1"/>
</dbReference>
<dbReference type="FunFam" id="1.20.120.1240:FF:000007">
    <property type="entry name" value="Interferon-induced GTP-binding protein Mx1"/>
    <property type="match status" value="1"/>
</dbReference>
<dbReference type="FunFam" id="3.40.50.300:FF:000621">
    <property type="entry name" value="Interferon-induced GTP-binding protein Mx1"/>
    <property type="match status" value="1"/>
</dbReference>
<dbReference type="Gene3D" id="1.20.120.1240">
    <property type="entry name" value="Dynamin, middle domain"/>
    <property type="match status" value="1"/>
</dbReference>
<dbReference type="Gene3D" id="3.40.50.300">
    <property type="entry name" value="P-loop containing nucleotide triphosphate hydrolases"/>
    <property type="match status" value="1"/>
</dbReference>
<dbReference type="InterPro" id="IPR022812">
    <property type="entry name" value="Dynamin"/>
</dbReference>
<dbReference type="InterPro" id="IPR001401">
    <property type="entry name" value="Dynamin_GTPase"/>
</dbReference>
<dbReference type="InterPro" id="IPR019762">
    <property type="entry name" value="Dynamin_GTPase_CS"/>
</dbReference>
<dbReference type="InterPro" id="IPR045063">
    <property type="entry name" value="Dynamin_N"/>
</dbReference>
<dbReference type="InterPro" id="IPR000375">
    <property type="entry name" value="Dynamin_stalk"/>
</dbReference>
<dbReference type="InterPro" id="IPR030381">
    <property type="entry name" value="G_DYNAMIN_dom"/>
</dbReference>
<dbReference type="InterPro" id="IPR003130">
    <property type="entry name" value="GED"/>
</dbReference>
<dbReference type="InterPro" id="IPR020850">
    <property type="entry name" value="GED_dom"/>
</dbReference>
<dbReference type="InterPro" id="IPR027417">
    <property type="entry name" value="P-loop_NTPase"/>
</dbReference>
<dbReference type="PANTHER" id="PTHR11566">
    <property type="entry name" value="DYNAMIN"/>
    <property type="match status" value="1"/>
</dbReference>
<dbReference type="PANTHER" id="PTHR11566:SF217">
    <property type="entry name" value="INTERFERON-INDUCED GTP-BINDING PROTEIN MX1"/>
    <property type="match status" value="1"/>
</dbReference>
<dbReference type="Pfam" id="PF01031">
    <property type="entry name" value="Dynamin_M"/>
    <property type="match status" value="1"/>
</dbReference>
<dbReference type="Pfam" id="PF00350">
    <property type="entry name" value="Dynamin_N"/>
    <property type="match status" value="1"/>
</dbReference>
<dbReference type="Pfam" id="PF02212">
    <property type="entry name" value="GED"/>
    <property type="match status" value="1"/>
</dbReference>
<dbReference type="PRINTS" id="PR00195">
    <property type="entry name" value="DYNAMIN"/>
</dbReference>
<dbReference type="SMART" id="SM00053">
    <property type="entry name" value="DYNc"/>
    <property type="match status" value="1"/>
</dbReference>
<dbReference type="SMART" id="SM00302">
    <property type="entry name" value="GED"/>
    <property type="match status" value="1"/>
</dbReference>
<dbReference type="SUPFAM" id="SSF52540">
    <property type="entry name" value="P-loop containing nucleoside triphosphate hydrolases"/>
    <property type="match status" value="1"/>
</dbReference>
<dbReference type="PROSITE" id="PS00410">
    <property type="entry name" value="G_DYNAMIN_1"/>
    <property type="match status" value="1"/>
</dbReference>
<dbReference type="PROSITE" id="PS51718">
    <property type="entry name" value="G_DYNAMIN_2"/>
    <property type="match status" value="1"/>
</dbReference>
<dbReference type="PROSITE" id="PS51388">
    <property type="entry name" value="GED"/>
    <property type="match status" value="1"/>
</dbReference>
<comment type="function">
    <text evidence="1">Interferon-induced dynamin-like GTPase with antiviral activity.</text>
</comment>
<comment type="subunit">
    <text evidence="1">Homooligomer. Oligomerizes into multimeric filamentous or ring-like structures by virtue of its stalk domain. Oligomerization is critical for GTPase activity, protein stability, and recognition of viral target structures (By similarity). Interacts with TRPC1, TRPC3, TRPC4, TRPC5, TRPC6 and TRPC7 (By similarity). Interacts with HSPA5 (By similarity). Interacts with TUBB/TUBB5 (By similarity). Interacts with DDX39A and DDX39B (By similarity).</text>
</comment>
<comment type="subcellular location">
    <subcellularLocation>
        <location evidence="1">Cytoplasm</location>
    </subcellularLocation>
    <subcellularLocation>
        <location evidence="1">Endoplasmic reticulum membrane</location>
        <topology evidence="1">Peripheral membrane protein</topology>
        <orientation evidence="1">Cytoplasmic side</orientation>
    </subcellularLocation>
    <subcellularLocation>
        <location evidence="1">Cytoplasm</location>
        <location evidence="1">Perinuclear region</location>
    </subcellularLocation>
    <text evidence="1">Binds preferentially to negatively charged phospholipids.</text>
</comment>
<comment type="induction">
    <text evidence="7">By type I and type III interferons.</text>
</comment>
<comment type="domain">
    <text evidence="1">The C-terminal GTPase effector domain (GED) is involved in oligomerization and viral target recognition.</text>
</comment>
<comment type="domain">
    <text evidence="1">The middle domain mediates self-assembly and oligomerization.</text>
</comment>
<comment type="PTM">
    <text evidence="1">ISGylated.</text>
</comment>
<comment type="similarity">
    <text evidence="5">Belongs to the TRAFAC class dynamin-like GTPase superfamily. Dynamin/Fzo/YdjA family.</text>
</comment>
<accession>Q4ADG7</accession>
<name>MX1_OTABY</name>